<reference key="1">
    <citation type="submission" date="2003-10" db="EMBL/GenBank/DDBJ databases">
        <authorList>
            <consortium name="NIH - Xenopus Gene Collection (XGC) project"/>
        </authorList>
    </citation>
    <scope>NUCLEOTIDE SEQUENCE [LARGE SCALE MRNA]</scope>
    <source>
        <tissue>Spleen</tissue>
    </source>
</reference>
<evidence type="ECO:0000250" key="1">
    <source>
        <dbReference type="UniProtKB" id="Q8WV22"/>
    </source>
</evidence>
<evidence type="ECO:0000255" key="2">
    <source>
        <dbReference type="PROSITE-ProRule" id="PRU00175"/>
    </source>
</evidence>
<evidence type="ECO:0000256" key="3">
    <source>
        <dbReference type="SAM" id="MobiDB-lite"/>
    </source>
</evidence>
<evidence type="ECO:0000305" key="4"/>
<evidence type="ECO:0007829" key="5">
    <source>
        <dbReference type="PDB" id="7DG2"/>
    </source>
</evidence>
<accession>Q6PAF4</accession>
<organism>
    <name type="scientific">Xenopus laevis</name>
    <name type="common">African clawed frog</name>
    <dbReference type="NCBI Taxonomy" id="8355"/>
    <lineage>
        <taxon>Eukaryota</taxon>
        <taxon>Metazoa</taxon>
        <taxon>Chordata</taxon>
        <taxon>Craniata</taxon>
        <taxon>Vertebrata</taxon>
        <taxon>Euteleostomi</taxon>
        <taxon>Amphibia</taxon>
        <taxon>Batrachia</taxon>
        <taxon>Anura</taxon>
        <taxon>Pipoidea</taxon>
        <taxon>Pipidae</taxon>
        <taxon>Xenopodinae</taxon>
        <taxon>Xenopus</taxon>
        <taxon>Xenopus</taxon>
    </lineage>
</organism>
<sequence>MADRINESHQRFLQALMSHGIMEGSAVRALHRHCCELHKVHYMHDKLDDFVGVLNRHLQPLFMTIEKGVGEEDGLTYYALVNRVENDITKMASDYAENELELFRKTMELIILSDNGFATSISILNLADELQSKKMKKKEVEQLLQSFVQEKWLIGRNGEYTLHTRCIMELEHYIRNTYQDVAKICNVCRKVAIQSQLCENCGIPLHLQCAGKYFHGKANPTCPNCNESWPHEIPDLNQVSSQGPSHSQTETVRGRNQRSKNTSTASRTSR</sequence>
<comment type="function">
    <text evidence="1">RING-type zinc finger-containing E3 ubiquitin ligase that assembles with melanoma antigen protein (MAGE) to catalyze the direct transfer of ubiquitin from E2 ubiquitin-conjugating enzyme to a specific substrate. Within MAGE-RING ubiquitin ligase complex, MAGE stimulates and specifies ubiquitin ligase activity likely through recruitment and/or stabilization of the E2 ubiquitin-conjugating enzyme at the E3:substrate complex. Involved in maintenance of genome integrity, DNA damage response and DNA repair.</text>
</comment>
<comment type="catalytic activity">
    <reaction evidence="1">
        <text>S-ubiquitinyl-[E2 ubiquitin-conjugating enzyme]-L-cysteine + [acceptor protein]-L-lysine = [E2 ubiquitin-conjugating enzyme]-L-cysteine + N(6)-ubiquitinyl-[acceptor protein]-L-lysine.</text>
        <dbReference type="EC" id="2.3.2.27"/>
    </reaction>
</comment>
<comment type="subunit">
    <text evidence="1">Component of the SMC5-SMC6 complex.</text>
</comment>
<comment type="subcellular location">
    <subcellularLocation>
        <location evidence="1">Nucleus</location>
    </subcellularLocation>
    <subcellularLocation>
        <location evidence="1">Chromosome</location>
        <location evidence="1">Telomere</location>
    </subcellularLocation>
</comment>
<comment type="similarity">
    <text evidence="4">Belongs to the NSE1 family.</text>
</comment>
<dbReference type="EC" id="2.3.2.27" evidence="1"/>
<dbReference type="EMBL" id="BC060339">
    <property type="protein sequence ID" value="AAH60339.1"/>
    <property type="molecule type" value="mRNA"/>
</dbReference>
<dbReference type="RefSeq" id="NP_001083134.1">
    <property type="nucleotide sequence ID" value="NM_001089665.1"/>
</dbReference>
<dbReference type="PDB" id="7DG2">
    <property type="method" value="X-ray"/>
    <property type="resolution" value="1.70 A"/>
    <property type="chains" value="A=3-248"/>
</dbReference>
<dbReference type="PDBsum" id="7DG2"/>
<dbReference type="SMR" id="Q6PAF4"/>
<dbReference type="DNASU" id="398764"/>
<dbReference type="GeneID" id="398764"/>
<dbReference type="KEGG" id="xla:398764"/>
<dbReference type="AGR" id="Xenbase:XB-GENE-1006461"/>
<dbReference type="CTD" id="398764"/>
<dbReference type="Xenbase" id="XB-GENE-1006461">
    <property type="gene designation" value="nsmce1.L"/>
</dbReference>
<dbReference type="OMA" id="WPGDKFV"/>
<dbReference type="OrthoDB" id="185455at2759"/>
<dbReference type="Proteomes" id="UP000186698">
    <property type="component" value="Chromosome 9_10L"/>
</dbReference>
<dbReference type="Bgee" id="398764">
    <property type="expression patterns" value="Expressed in testis and 19 other cell types or tissues"/>
</dbReference>
<dbReference type="GO" id="GO:0000781">
    <property type="term" value="C:chromosome, telomeric region"/>
    <property type="evidence" value="ECO:0007669"/>
    <property type="project" value="UniProtKB-SubCell"/>
</dbReference>
<dbReference type="GO" id="GO:0005634">
    <property type="term" value="C:nucleus"/>
    <property type="evidence" value="ECO:0000318"/>
    <property type="project" value="GO_Central"/>
</dbReference>
<dbReference type="GO" id="GO:0030915">
    <property type="term" value="C:Smc5-Smc6 complex"/>
    <property type="evidence" value="ECO:0000250"/>
    <property type="project" value="UniProtKB"/>
</dbReference>
<dbReference type="GO" id="GO:0046983">
    <property type="term" value="F:protein dimerization activity"/>
    <property type="evidence" value="ECO:0000250"/>
    <property type="project" value="UniProtKB"/>
</dbReference>
<dbReference type="GO" id="GO:0061630">
    <property type="term" value="F:ubiquitin protein ligase activity"/>
    <property type="evidence" value="ECO:0000250"/>
    <property type="project" value="UniProtKB"/>
</dbReference>
<dbReference type="GO" id="GO:0004842">
    <property type="term" value="F:ubiquitin-protein transferase activity"/>
    <property type="evidence" value="ECO:0000318"/>
    <property type="project" value="GO_Central"/>
</dbReference>
<dbReference type="GO" id="GO:0008270">
    <property type="term" value="F:zinc ion binding"/>
    <property type="evidence" value="ECO:0007669"/>
    <property type="project" value="UniProtKB-KW"/>
</dbReference>
<dbReference type="GO" id="GO:0006974">
    <property type="term" value="P:DNA damage response"/>
    <property type="evidence" value="ECO:0000250"/>
    <property type="project" value="UniProtKB"/>
</dbReference>
<dbReference type="GO" id="GO:0000724">
    <property type="term" value="P:double-strand break repair via homologous recombination"/>
    <property type="evidence" value="ECO:0000318"/>
    <property type="project" value="GO_Central"/>
</dbReference>
<dbReference type="CDD" id="cd16493">
    <property type="entry name" value="RING-CH-C4HC3_NSE1"/>
    <property type="match status" value="1"/>
</dbReference>
<dbReference type="FunFam" id="1.10.10.10:FF:000270">
    <property type="entry name" value="Non-structural maintenance of chromosomes element 1 homolog"/>
    <property type="match status" value="1"/>
</dbReference>
<dbReference type="FunFam" id="3.90.1150.220:FF:000001">
    <property type="entry name" value="Non-structural maintenance of chromosomes element 1 homolog"/>
    <property type="match status" value="1"/>
</dbReference>
<dbReference type="FunFam" id="3.30.40.10:FF:000298">
    <property type="entry name" value="non-structural maintenance of chromosomes element 1 homolog"/>
    <property type="match status" value="1"/>
</dbReference>
<dbReference type="Gene3D" id="3.90.1150.220">
    <property type="match status" value="1"/>
</dbReference>
<dbReference type="Gene3D" id="1.10.10.10">
    <property type="entry name" value="Winged helix-like DNA-binding domain superfamily/Winged helix DNA-binding domain"/>
    <property type="match status" value="1"/>
</dbReference>
<dbReference type="Gene3D" id="3.30.40.10">
    <property type="entry name" value="Zinc/RING finger domain, C3HC4 (zinc finger)"/>
    <property type="match status" value="1"/>
</dbReference>
<dbReference type="InterPro" id="IPR046349">
    <property type="entry name" value="C1-like_sf"/>
</dbReference>
<dbReference type="InterPro" id="IPR011513">
    <property type="entry name" value="Nse1"/>
</dbReference>
<dbReference type="InterPro" id="IPR014857">
    <property type="entry name" value="Nse1_RING_C4HC3-type"/>
</dbReference>
<dbReference type="InterPro" id="IPR036388">
    <property type="entry name" value="WH-like_DNA-bd_sf"/>
</dbReference>
<dbReference type="InterPro" id="IPR013083">
    <property type="entry name" value="Znf_RING/FYVE/PHD"/>
</dbReference>
<dbReference type="PANTHER" id="PTHR20973">
    <property type="entry name" value="NON-SMC ELEMENT 1-RELATED"/>
    <property type="match status" value="1"/>
</dbReference>
<dbReference type="PANTHER" id="PTHR20973:SF0">
    <property type="entry name" value="NON-STRUCTURAL MAINTENANCE OF CHROMOSOMES ELEMENT 1 HOMOLOG"/>
    <property type="match status" value="1"/>
</dbReference>
<dbReference type="Pfam" id="PF07574">
    <property type="entry name" value="SMC_Nse1"/>
    <property type="match status" value="1"/>
</dbReference>
<dbReference type="Pfam" id="PF08746">
    <property type="entry name" value="zf-RING-like"/>
    <property type="match status" value="1"/>
</dbReference>
<dbReference type="SUPFAM" id="SSF57889">
    <property type="entry name" value="Cysteine-rich domain"/>
    <property type="match status" value="1"/>
</dbReference>
<feature type="chain" id="PRO_0000270949" description="Non-structural maintenance of chromosomes element 1 homolog">
    <location>
        <begin position="1"/>
        <end position="270"/>
    </location>
</feature>
<feature type="zinc finger region" description="RING-type; atypical" evidence="2">
    <location>
        <begin position="185"/>
        <end position="226"/>
    </location>
</feature>
<feature type="region of interest" description="Disordered" evidence="3">
    <location>
        <begin position="236"/>
        <end position="270"/>
    </location>
</feature>
<feature type="compositionally biased region" description="Polar residues" evidence="3">
    <location>
        <begin position="237"/>
        <end position="251"/>
    </location>
</feature>
<feature type="compositionally biased region" description="Polar residues" evidence="3">
    <location>
        <begin position="259"/>
        <end position="270"/>
    </location>
</feature>
<feature type="helix" evidence="5">
    <location>
        <begin position="7"/>
        <end position="19"/>
    </location>
</feature>
<feature type="strand" evidence="5">
    <location>
        <begin position="20"/>
        <end position="23"/>
    </location>
</feature>
<feature type="helix" evidence="5">
    <location>
        <begin position="24"/>
        <end position="37"/>
    </location>
</feature>
<feature type="helix" evidence="5">
    <location>
        <begin position="47"/>
        <end position="58"/>
    </location>
</feature>
<feature type="helix" evidence="5">
    <location>
        <begin position="59"/>
        <end position="61"/>
    </location>
</feature>
<feature type="strand" evidence="5">
    <location>
        <begin position="63"/>
        <end position="69"/>
    </location>
</feature>
<feature type="turn" evidence="5">
    <location>
        <begin position="71"/>
        <end position="73"/>
    </location>
</feature>
<feature type="strand" evidence="5">
    <location>
        <begin position="76"/>
        <end position="82"/>
    </location>
</feature>
<feature type="helix" evidence="5">
    <location>
        <begin position="89"/>
        <end position="91"/>
    </location>
</feature>
<feature type="helix" evidence="5">
    <location>
        <begin position="97"/>
        <end position="112"/>
    </location>
</feature>
<feature type="strand" evidence="5">
    <location>
        <begin position="113"/>
        <end position="116"/>
    </location>
</feature>
<feature type="helix" evidence="5">
    <location>
        <begin position="120"/>
        <end position="129"/>
    </location>
</feature>
<feature type="strand" evidence="5">
    <location>
        <begin position="131"/>
        <end position="133"/>
    </location>
</feature>
<feature type="helix" evidence="5">
    <location>
        <begin position="137"/>
        <end position="149"/>
    </location>
</feature>
<feature type="strand" evidence="5">
    <location>
        <begin position="152"/>
        <end position="156"/>
    </location>
</feature>
<feature type="strand" evidence="5">
    <location>
        <begin position="159"/>
        <end position="162"/>
    </location>
</feature>
<feature type="helix" evidence="5">
    <location>
        <begin position="164"/>
        <end position="177"/>
    </location>
</feature>
<feature type="turn" evidence="5">
    <location>
        <begin position="178"/>
        <end position="181"/>
    </location>
</feature>
<feature type="turn" evidence="5">
    <location>
        <begin position="186"/>
        <end position="188"/>
    </location>
</feature>
<feature type="strand" evidence="5">
    <location>
        <begin position="190"/>
        <end position="194"/>
    </location>
</feature>
<feature type="turn" evidence="5">
    <location>
        <begin position="199"/>
        <end position="201"/>
    </location>
</feature>
<feature type="helix" evidence="5">
    <location>
        <begin position="207"/>
        <end position="213"/>
    </location>
</feature>
<feature type="turn" evidence="5">
    <location>
        <begin position="223"/>
        <end position="225"/>
    </location>
</feature>
<proteinExistence type="evidence at protein level"/>
<keyword id="KW-0002">3D-structure</keyword>
<keyword id="KW-0158">Chromosome</keyword>
<keyword id="KW-0227">DNA damage</keyword>
<keyword id="KW-0233">DNA recombination</keyword>
<keyword id="KW-0234">DNA repair</keyword>
<keyword id="KW-0479">Metal-binding</keyword>
<keyword id="KW-0539">Nucleus</keyword>
<keyword id="KW-1185">Reference proteome</keyword>
<keyword id="KW-0779">Telomere</keyword>
<keyword id="KW-0808">Transferase</keyword>
<keyword id="KW-0833">Ubl conjugation pathway</keyword>
<keyword id="KW-0862">Zinc</keyword>
<keyword id="KW-0863">Zinc-finger</keyword>
<gene>
    <name type="primary">nsmce1</name>
</gene>
<protein>
    <recommendedName>
        <fullName>Non-structural maintenance of chromosomes element 1 homolog</fullName>
        <shortName>Non-SMC element 1 homolog</shortName>
        <ecNumber evidence="1">2.3.2.27</ecNumber>
    </recommendedName>
</protein>
<name>NSE1_XENLA</name>